<evidence type="ECO:0000269" key="1">
    <source>
    </source>
</evidence>
<evidence type="ECO:0000305" key="2"/>
<accession>P01066</accession>
<feature type="chain" id="PRO_0000003260" description="Bowman-Birk type proteinase inhibitor A-II">
    <location>
        <begin position="1"/>
        <end position="70"/>
    </location>
</feature>
<feature type="chain" id="PRO_0000003261" description="Bowman-Birk type proteinase inhibitor A-I">
    <location>
        <begin position="4"/>
        <end position="70"/>
    </location>
</feature>
<feature type="chain" id="PRO_0000003262" description="Bowman-Birk type proteinase inhibitor B-I">
    <location>
        <begin position="8"/>
        <end position="70"/>
    </location>
</feature>
<feature type="chain" id="PRO_0000003263" description="Bowman-Birk type proteinase inhibitor B-III">
    <location>
        <begin position="10"/>
        <end position="70"/>
    </location>
</feature>
<feature type="site" description="Reactive bond for trypsin">
    <location>
        <begin position="19"/>
        <end position="20"/>
    </location>
</feature>
<feature type="site" description="Reactive bond for trypsin">
    <location>
        <begin position="47"/>
        <end position="48"/>
    </location>
</feature>
<feature type="disulfide bond" evidence="1">
    <location>
        <begin position="11"/>
        <end position="68"/>
    </location>
</feature>
<feature type="disulfide bond" evidence="1">
    <location>
        <begin position="12"/>
        <end position="29"/>
    </location>
</feature>
<feature type="disulfide bond" evidence="1">
    <location>
        <begin position="15"/>
        <end position="63"/>
    </location>
</feature>
<feature type="disulfide bond" evidence="1">
    <location>
        <begin position="17"/>
        <end position="27"/>
    </location>
</feature>
<feature type="disulfide bond" evidence="1">
    <location>
        <begin position="36"/>
        <end position="43"/>
    </location>
</feature>
<feature type="disulfide bond" evidence="1">
    <location>
        <begin position="40"/>
        <end position="55"/>
    </location>
</feature>
<feature type="disulfide bond" evidence="1">
    <location>
        <begin position="45"/>
        <end position="53"/>
    </location>
</feature>
<protein>
    <recommendedName>
        <fullName>Bowman-Birk type proteinase inhibitor A-II</fullName>
    </recommendedName>
    <component>
        <recommendedName>
            <fullName>Bowman-Birk type proteinase inhibitor A-I</fullName>
        </recommendedName>
    </component>
    <component>
        <recommendedName>
            <fullName>Bowman-Birk type proteinase inhibitor B-I</fullName>
        </recommendedName>
    </component>
    <component>
        <recommendedName>
            <fullName>Bowman-Birk type proteinase inhibitor B-III</fullName>
        </recommendedName>
    </component>
</protein>
<sequence>EASSSSDDNVCCNGCLCDRRAPPYFECVCVDTFDHCPASCNSCVCTRSNPPQCRCTDKTQGRCPVTECRS</sequence>
<comment type="function">
    <text>These proteins inhibit trypsin and chymotrypsin, having 2 sites of interaction with trypsin. The site of interaction with chymotrypsin has not been determined but is not independent of the trypsin-reactive sites.</text>
</comment>
<comment type="miscellaneous">
    <text>Four inhibitors were found that are identical except at their amino ends and that probably arise by proteolytic degradation of a single gene product.</text>
</comment>
<comment type="similarity">
    <text evidence="2">Belongs to the Bowman-Birk serine protease inhibitor family.</text>
</comment>
<keyword id="KW-0903">Direct protein sequencing</keyword>
<keyword id="KW-1015">Disulfide bond</keyword>
<keyword id="KW-0646">Protease inhibitor</keyword>
<keyword id="KW-0722">Serine protease inhibitor</keyword>
<proteinExistence type="evidence at protein level"/>
<organism>
    <name type="scientific">Arachis hypogaea</name>
    <name type="common">Peanut</name>
    <dbReference type="NCBI Taxonomy" id="3818"/>
    <lineage>
        <taxon>Eukaryota</taxon>
        <taxon>Viridiplantae</taxon>
        <taxon>Streptophyta</taxon>
        <taxon>Embryophyta</taxon>
        <taxon>Tracheophyta</taxon>
        <taxon>Spermatophyta</taxon>
        <taxon>Magnoliopsida</taxon>
        <taxon>eudicotyledons</taxon>
        <taxon>Gunneridae</taxon>
        <taxon>Pentapetalae</taxon>
        <taxon>rosids</taxon>
        <taxon>fabids</taxon>
        <taxon>Fabales</taxon>
        <taxon>Fabaceae</taxon>
        <taxon>Papilionoideae</taxon>
        <taxon>50 kb inversion clade</taxon>
        <taxon>dalbergioids sensu lato</taxon>
        <taxon>Dalbergieae</taxon>
        <taxon>Pterocarpus clade</taxon>
        <taxon>Arachis</taxon>
    </lineage>
</organism>
<reference key="1">
    <citation type="journal article" date="1983" name="J. Biochem.">
        <title>Amino acid sequences of trypsin-chymotrypsin inhibitors (A-I, A-II, B-I, and B-II) from peanut (Arachis hypogaea): a discussion on the molecular evolution of legume Bowman-Birk type inhibitors.</title>
        <authorList>
            <person name="Norioka S."/>
            <person name="Ikenaka T."/>
        </authorList>
    </citation>
    <scope>PROTEIN SEQUENCE OF 1-19</scope>
</reference>
<reference key="2">
    <citation type="journal article" date="1983" name="J. Biochem.">
        <title>Amino acid sequence of a trypsin-chymotrypsin inhibitor, B-III, of peanut (Arachis hypogaea).</title>
        <authorList>
            <person name="Norioka S."/>
            <person name="Ikenaka T."/>
        </authorList>
    </citation>
    <scope>PROTEIN SEQUENCE OF 10-70</scope>
</reference>
<reference key="3">
    <citation type="journal article" date="1987" name="J. Biochem.">
        <title>The structure of Bowman-Birk type protease inhibitor A-II from peanut (Arachis hypogaea) at 3.3-A resolution.</title>
        <authorList>
            <person name="Suzuki A."/>
            <person name="Tsunogae Y."/>
            <person name="Tanaka I."/>
            <person name="Yamane T."/>
            <person name="Ashida T."/>
            <person name="Norioka S."/>
            <person name="Hara S."/>
            <person name="Ikenaka T."/>
        </authorList>
    </citation>
    <scope>X-RAY CRYSTALLOGRAPHY (3.3 ANGSTROMS)</scope>
</reference>
<reference key="4">
    <citation type="journal article" date="1993" name="J. Mol. Biol.">
        <title>Crystallographic refinement of Bowman-Birk type protease inhibitor A-II from peanut (Arachis hypogaea) at 2.3-A resolution.</title>
        <authorList>
            <person name="Suzuki A."/>
            <person name="Yamane T."/>
            <person name="Ashida T."/>
            <person name="Norioka S."/>
            <person name="Hara S."/>
            <person name="Ikenaka T."/>
        </authorList>
    </citation>
    <scope>X-RAY CRYSTALLOGRAPHY (2.3 ANGSTROMS)</scope>
    <scope>DISULFIDE BONDS</scope>
</reference>
<name>IBB1_ARAHY</name>
<dbReference type="PIR" id="A91975">
    <property type="entry name" value="TINPA2"/>
</dbReference>
<dbReference type="BMRB" id="P01066"/>
<dbReference type="SMR" id="P01066"/>
<dbReference type="MEROPS" id="I12.006"/>
<dbReference type="MEROPS" id="I12.017"/>
<dbReference type="GO" id="GO:0005576">
    <property type="term" value="C:extracellular region"/>
    <property type="evidence" value="ECO:0007669"/>
    <property type="project" value="InterPro"/>
</dbReference>
<dbReference type="GO" id="GO:0004867">
    <property type="term" value="F:serine-type endopeptidase inhibitor activity"/>
    <property type="evidence" value="ECO:0007669"/>
    <property type="project" value="UniProtKB-KW"/>
</dbReference>
<dbReference type="CDD" id="cd00023">
    <property type="entry name" value="BBI"/>
    <property type="match status" value="1"/>
</dbReference>
<dbReference type="Gene3D" id="2.10.69.10">
    <property type="entry name" value="Cysteine Protease (Bromelain) Inhibitor, subunit H"/>
    <property type="match status" value="1"/>
</dbReference>
<dbReference type="InterPro" id="IPR035995">
    <property type="entry name" value="Bowman-Birk_prot_inh"/>
</dbReference>
<dbReference type="InterPro" id="IPR000877">
    <property type="entry name" value="Prot_inh_BBI"/>
</dbReference>
<dbReference type="Pfam" id="PF00228">
    <property type="entry name" value="Bowman-Birk_leg"/>
    <property type="match status" value="1"/>
</dbReference>
<dbReference type="SMART" id="SM00269">
    <property type="entry name" value="BowB"/>
    <property type="match status" value="1"/>
</dbReference>
<dbReference type="SUPFAM" id="SSF57247">
    <property type="entry name" value="Bowman-Birk inhibitor, BBI"/>
    <property type="match status" value="1"/>
</dbReference>
<dbReference type="PROSITE" id="PS00281">
    <property type="entry name" value="BOWMAN_BIRK"/>
    <property type="match status" value="1"/>
</dbReference>